<reference key="1">
    <citation type="journal article" date="1999" name="Biochem. J.">
        <title>Cloning and expression of rat pancreatic beta-cell malonyl-CoA decarboxylase.</title>
        <authorList>
            <person name="Voilley N."/>
            <person name="Roduit R."/>
            <person name="Vicaretti R."/>
            <person name="Bonny C."/>
            <person name="Waeber G."/>
            <person name="Dyck J.R."/>
            <person name="Lopaschuk G.D."/>
            <person name="Prentki M."/>
        </authorList>
    </citation>
    <scope>NUCLEOTIDE SEQUENCE [MRNA] (ISOFORM MITOCHONDRIAL)</scope>
    <scope>CATALYTIC ACTIVITY</scope>
    <scope>TISSUE SPECIFICITY</scope>
</reference>
<reference key="2">
    <citation type="journal article" date="2000" name="Biochem. J.">
        <title>Characterization of rat liver malonyl-CoA decarboxylase and the study of its role in regulating fatty acid metabolism.</title>
        <authorList>
            <person name="Dyck J.R."/>
            <person name="Berthiaume L.G."/>
            <person name="Thomas P.D."/>
            <person name="Kantor P.F."/>
            <person name="Barr A.J."/>
            <person name="Barr R."/>
            <person name="Singh D."/>
            <person name="Hopkins T.A."/>
            <person name="Voilley N."/>
            <person name="Prentki M."/>
            <person name="Lopaschuk G.D."/>
        </authorList>
    </citation>
    <scope>NUCLEOTIDE SEQUENCE [MRNA] (ISOFORM MITOCHONDRIAL)</scope>
    <scope>PARTIAL PROTEIN SEQUENCE</scope>
    <scope>FUNCTION</scope>
    <scope>PROTEOLYTIC PROCESSING</scope>
    <scope>TISSUE SPECIFICITY</scope>
</reference>
<reference key="3">
    <citation type="journal article" date="2002" name="J. Biochem. Mol. Biol.">
        <title>Rat malonyl-CoA decarboxylase; cloning, expression in E. coli and its biochemical characterization.</title>
        <authorList>
            <person name="Lee G.Y."/>
            <person name="Bahk Y.Y."/>
            <person name="Kim Y.S."/>
        </authorList>
    </citation>
    <scope>NUCLEOTIDE SEQUENCE [MRNA] (ISOFORM MITOCHONDRIAL)</scope>
    <scope>CATALYTIC ACTIVITY</scope>
    <scope>BIOPHYSICOCHEMICAL PROPERTIES</scope>
    <scope>TISSUE SPECIFICITY</scope>
    <source>
        <strain>Sprague-Dawley</strain>
    </source>
</reference>
<reference key="4">
    <citation type="journal article" date="2004" name="Genome Res.">
        <title>The status, quality, and expansion of the NIH full-length cDNA project: the Mammalian Gene Collection (MGC).</title>
        <authorList>
            <consortium name="The MGC Project Team"/>
        </authorList>
    </citation>
    <scope>NUCLEOTIDE SEQUENCE [LARGE SCALE MRNA] (ISOFORM MITOCHONDRIAL)</scope>
    <source>
        <tissue>Prostate</tissue>
    </source>
</reference>
<reference key="5">
    <citation type="journal article" date="1999" name="J. Biol. Chem.">
        <title>MCD encodes peroxisomal and cytoplasmic forms of malonyl-CoA decarboxylase and is mutated in malonyl-CoA decarboxylase deficiency.</title>
        <authorList>
            <person name="Sacksteder K.A."/>
            <person name="Morrell J.C."/>
            <person name="Wanders R.J.A."/>
            <person name="Matalon R."/>
            <person name="Gould S.J."/>
        </authorList>
    </citation>
    <scope>SUBCELLULAR LOCATION (ISOFORM CYTOPLASMIC+PEROXISOMAL)</scope>
    <scope>TISSUE SPECIFICITY</scope>
</reference>
<reference key="6">
    <citation type="journal article" date="2004" name="Circ. Res.">
        <title>Malonyl coenzyme a decarboxylase inhibition protects the ischemic heart by inhibiting fatty acid oxidation and stimulating glucose oxidation.</title>
        <authorList>
            <person name="Dyck J.R."/>
            <person name="Cheng J.F."/>
            <person name="Stanley W.C."/>
            <person name="Barr R."/>
            <person name="Chandler M.P."/>
            <person name="Brown S."/>
            <person name="Wallace D."/>
            <person name="Arrhenius T."/>
            <person name="Harmon C."/>
            <person name="Yang G."/>
            <person name="Nadzan A.M."/>
            <person name="Lopaschuk G.D."/>
        </authorList>
    </citation>
    <scope>FUNCTION</scope>
</reference>
<reference key="7">
    <citation type="journal article" date="2005" name="FEBS Lett.">
        <title>Malonyl-CoA decarboxylase is present in the cytosolic, mitochondrial and peroxisomal compartments of rat hepatocytes.</title>
        <authorList>
            <person name="Joly E."/>
            <person name="Bendayan M."/>
            <person name="Roduit R."/>
            <person name="Saha A.K."/>
            <person name="Ruderman N.B."/>
            <person name="Prentki M."/>
        </authorList>
    </citation>
    <scope>FUNCTION</scope>
    <scope>CATALYTIC ACTIVITY</scope>
    <scope>SUBCELLULAR LOCATION</scope>
</reference>
<reference key="8">
    <citation type="journal article" date="2006" name="J. Proteome Res.">
        <title>Mass spectrometric identification of K210 essential for rat malonyl-CoA decarboxylase catalysis.</title>
        <authorList>
            <person name="Nam H.W."/>
            <person name="Lee G.Y."/>
            <person name="Kim Y.S."/>
        </authorList>
    </citation>
    <scope>ACETYLATION AT LYS-58; LYS-167; LYS-210; LYS-316; LYS-388 AND LYS-441</scope>
    <scope>MUTAGENESIS OF LYS-210; LYS-308 AND LYS-388</scope>
</reference>
<keyword id="KW-0007">Acetylation</keyword>
<keyword id="KW-0024">Alternative initiation</keyword>
<keyword id="KW-0963">Cytoplasm</keyword>
<keyword id="KW-0210">Decarboxylase</keyword>
<keyword id="KW-0903">Direct protein sequencing</keyword>
<keyword id="KW-1015">Disulfide bond</keyword>
<keyword id="KW-0275">Fatty acid biosynthesis</keyword>
<keyword id="KW-0276">Fatty acid metabolism</keyword>
<keyword id="KW-0444">Lipid biosynthesis</keyword>
<keyword id="KW-0443">Lipid metabolism</keyword>
<keyword id="KW-0456">Lyase</keyword>
<keyword id="KW-0496">Mitochondrion</keyword>
<keyword id="KW-0576">Peroxisome</keyword>
<keyword id="KW-1185">Reference proteome</keyword>
<keyword id="KW-0809">Transit peptide</keyword>
<evidence type="ECO:0000250" key="1"/>
<evidence type="ECO:0000250" key="2">
    <source>
        <dbReference type="UniProtKB" id="O95822"/>
    </source>
</evidence>
<evidence type="ECO:0000250" key="3">
    <source>
        <dbReference type="UniProtKB" id="Q99J39"/>
    </source>
</evidence>
<evidence type="ECO:0000255" key="4"/>
<evidence type="ECO:0000269" key="5">
    <source>
    </source>
</evidence>
<evidence type="ECO:0000269" key="6">
    <source>
    </source>
</evidence>
<evidence type="ECO:0000269" key="7">
    <source>
    </source>
</evidence>
<evidence type="ECO:0000269" key="8">
    <source>
    </source>
</evidence>
<evidence type="ECO:0000269" key="9">
    <source>
    </source>
</evidence>
<evidence type="ECO:0000269" key="10">
    <source>
    </source>
</evidence>
<evidence type="ECO:0000269" key="11">
    <source>
    </source>
</evidence>
<evidence type="ECO:0000305" key="12"/>
<evidence type="ECO:0000305" key="13">
    <source>
    </source>
</evidence>
<evidence type="ECO:0000312" key="14">
    <source>
        <dbReference type="RGD" id="620234"/>
    </source>
</evidence>
<organism>
    <name type="scientific">Rattus norvegicus</name>
    <name type="common">Rat</name>
    <dbReference type="NCBI Taxonomy" id="10116"/>
    <lineage>
        <taxon>Eukaryota</taxon>
        <taxon>Metazoa</taxon>
        <taxon>Chordata</taxon>
        <taxon>Craniata</taxon>
        <taxon>Vertebrata</taxon>
        <taxon>Euteleostomi</taxon>
        <taxon>Mammalia</taxon>
        <taxon>Eutheria</taxon>
        <taxon>Euarchontoglires</taxon>
        <taxon>Glires</taxon>
        <taxon>Rodentia</taxon>
        <taxon>Myomorpha</taxon>
        <taxon>Muroidea</taxon>
        <taxon>Muridae</taxon>
        <taxon>Murinae</taxon>
        <taxon>Rattus</taxon>
    </lineage>
</organism>
<accession>Q920F5</accession>
<accession>Q9WUY2</accession>
<dbReference type="EC" id="4.1.1.9" evidence="5 8 10"/>
<dbReference type="EMBL" id="AJ007704">
    <property type="protein sequence ID" value="CAB46681.1"/>
    <property type="molecule type" value="mRNA"/>
</dbReference>
<dbReference type="EMBL" id="AF304865">
    <property type="protein sequence ID" value="AAL09352.1"/>
    <property type="molecule type" value="mRNA"/>
</dbReference>
<dbReference type="EMBL" id="BC061845">
    <property type="protein sequence ID" value="AAH61845.1"/>
    <property type="molecule type" value="mRNA"/>
</dbReference>
<dbReference type="RefSeq" id="NP_445929.2">
    <molecule id="Q920F5-1"/>
    <property type="nucleotide sequence ID" value="NM_053477.2"/>
</dbReference>
<dbReference type="SMR" id="Q920F5"/>
<dbReference type="FunCoup" id="Q920F5">
    <property type="interactions" value="923"/>
</dbReference>
<dbReference type="IntAct" id="Q920F5">
    <property type="interactions" value="1"/>
</dbReference>
<dbReference type="STRING" id="10116.ENSRNOP00000019923"/>
<dbReference type="GlyGen" id="Q920F5">
    <property type="glycosylation" value="1 site"/>
</dbReference>
<dbReference type="iPTMnet" id="Q920F5"/>
<dbReference type="PhosphoSitePlus" id="Q920F5"/>
<dbReference type="jPOST" id="Q920F5"/>
<dbReference type="PaxDb" id="10116-ENSRNOP00000019923"/>
<dbReference type="ABCD" id="Q920F5">
    <property type="antibodies" value="4 sequenced antibodies"/>
</dbReference>
<dbReference type="Ensembl" id="ENSRNOT00000019923.6">
    <molecule id="Q920F5-1"/>
    <property type="protein sequence ID" value="ENSRNOP00000019923.3"/>
    <property type="gene ID" value="ENSRNOG00000014522.6"/>
</dbReference>
<dbReference type="GeneID" id="85239"/>
<dbReference type="KEGG" id="rno:85239"/>
<dbReference type="UCSC" id="RGD:620234">
    <molecule id="Q920F5-1"/>
    <property type="organism name" value="rat"/>
</dbReference>
<dbReference type="AGR" id="RGD:620234"/>
<dbReference type="CTD" id="23417"/>
<dbReference type="RGD" id="620234">
    <property type="gene designation" value="Mlycd"/>
</dbReference>
<dbReference type="eggNOG" id="KOG3018">
    <property type="taxonomic scope" value="Eukaryota"/>
</dbReference>
<dbReference type="GeneTree" id="ENSGT00390000005410"/>
<dbReference type="HOGENOM" id="CLU_023433_0_0_1"/>
<dbReference type="InParanoid" id="Q920F5"/>
<dbReference type="OMA" id="PIDWSTP"/>
<dbReference type="OrthoDB" id="426718at2759"/>
<dbReference type="PhylomeDB" id="Q920F5"/>
<dbReference type="TreeFam" id="TF312959"/>
<dbReference type="BRENDA" id="4.1.1.9">
    <property type="organism ID" value="5301"/>
</dbReference>
<dbReference type="Reactome" id="R-RNO-390247">
    <property type="pathway name" value="Beta-oxidation of very long chain fatty acids"/>
</dbReference>
<dbReference type="Reactome" id="R-RNO-9033241">
    <property type="pathway name" value="Peroxisomal protein import"/>
</dbReference>
<dbReference type="SABIO-RK" id="Q920F5"/>
<dbReference type="UniPathway" id="UPA00340">
    <property type="reaction ID" value="UER00710"/>
</dbReference>
<dbReference type="PRO" id="PR:Q920F5"/>
<dbReference type="Proteomes" id="UP000002494">
    <property type="component" value="Chromosome 19"/>
</dbReference>
<dbReference type="Bgee" id="ENSRNOG00000014522">
    <property type="expression patterns" value="Expressed in heart and 20 other cell types or tissues"/>
</dbReference>
<dbReference type="GO" id="GO:0005737">
    <property type="term" value="C:cytoplasm"/>
    <property type="evidence" value="ECO:0000314"/>
    <property type="project" value="UniProtKB"/>
</dbReference>
<dbReference type="GO" id="GO:0005759">
    <property type="term" value="C:mitochondrial matrix"/>
    <property type="evidence" value="ECO:0000314"/>
    <property type="project" value="UniProtKB"/>
</dbReference>
<dbReference type="GO" id="GO:0005739">
    <property type="term" value="C:mitochondrion"/>
    <property type="evidence" value="ECO:0000266"/>
    <property type="project" value="RGD"/>
</dbReference>
<dbReference type="GO" id="GO:0005782">
    <property type="term" value="C:peroxisomal matrix"/>
    <property type="evidence" value="ECO:0000314"/>
    <property type="project" value="UniProtKB"/>
</dbReference>
<dbReference type="GO" id="GO:0005777">
    <property type="term" value="C:peroxisome"/>
    <property type="evidence" value="ECO:0000314"/>
    <property type="project" value="UniProtKB"/>
</dbReference>
<dbReference type="GO" id="GO:0042802">
    <property type="term" value="F:identical protein binding"/>
    <property type="evidence" value="ECO:0000266"/>
    <property type="project" value="RGD"/>
</dbReference>
<dbReference type="GO" id="GO:0050080">
    <property type="term" value="F:malonyl-CoA decarboxylase activity"/>
    <property type="evidence" value="ECO:0000314"/>
    <property type="project" value="RGD"/>
</dbReference>
<dbReference type="GO" id="GO:0006085">
    <property type="term" value="P:acetyl-CoA biosynthetic process"/>
    <property type="evidence" value="ECO:0000314"/>
    <property type="project" value="RGD"/>
</dbReference>
<dbReference type="GO" id="GO:0006633">
    <property type="term" value="P:fatty acid biosynthetic process"/>
    <property type="evidence" value="ECO:0000315"/>
    <property type="project" value="UniProtKB"/>
</dbReference>
<dbReference type="GO" id="GO:0019395">
    <property type="term" value="P:fatty acid oxidation"/>
    <property type="evidence" value="ECO:0000314"/>
    <property type="project" value="RGD"/>
</dbReference>
<dbReference type="GO" id="GO:2001294">
    <property type="term" value="P:malonyl-CoA catabolic process"/>
    <property type="evidence" value="ECO:0000250"/>
    <property type="project" value="UniProtKB"/>
</dbReference>
<dbReference type="GO" id="GO:0046321">
    <property type="term" value="P:positive regulation of fatty acid oxidation"/>
    <property type="evidence" value="ECO:0000250"/>
    <property type="project" value="UniProtKB"/>
</dbReference>
<dbReference type="GO" id="GO:0031998">
    <property type="term" value="P:regulation of fatty acid beta-oxidation"/>
    <property type="evidence" value="ECO:0000314"/>
    <property type="project" value="RGD"/>
</dbReference>
<dbReference type="GO" id="GO:0046320">
    <property type="term" value="P:regulation of fatty acid oxidation"/>
    <property type="evidence" value="ECO:0000315"/>
    <property type="project" value="RGD"/>
</dbReference>
<dbReference type="GO" id="GO:0010906">
    <property type="term" value="P:regulation of glucose metabolic process"/>
    <property type="evidence" value="ECO:0000315"/>
    <property type="project" value="UniProtKB"/>
</dbReference>
<dbReference type="GO" id="GO:0002931">
    <property type="term" value="P:response to ischemia"/>
    <property type="evidence" value="ECO:0000315"/>
    <property type="project" value="UniProtKB"/>
</dbReference>
<dbReference type="GO" id="GO:0007584">
    <property type="term" value="P:response to nutrient"/>
    <property type="evidence" value="ECO:0000270"/>
    <property type="project" value="RGD"/>
</dbReference>
<dbReference type="FunFam" id="1.20.140.90:FF:000001">
    <property type="entry name" value="Malonyl-CoA decarboxylase, mitochondrial"/>
    <property type="match status" value="1"/>
</dbReference>
<dbReference type="FunFam" id="3.40.630.150:FF:000001">
    <property type="entry name" value="Malonyl-CoA decarboxylase, mitochondrial"/>
    <property type="match status" value="1"/>
</dbReference>
<dbReference type="Gene3D" id="3.40.630.150">
    <property type="entry name" value="Malonyl-CoA decarboxylase, catalytic domain"/>
    <property type="match status" value="1"/>
</dbReference>
<dbReference type="Gene3D" id="1.20.140.90">
    <property type="entry name" value="Malonyl-CoA decarboxylase, oligemerization domain"/>
    <property type="match status" value="1"/>
</dbReference>
<dbReference type="InterPro" id="IPR038917">
    <property type="entry name" value="Malonyl_CoA_deC"/>
</dbReference>
<dbReference type="InterPro" id="IPR007956">
    <property type="entry name" value="Malonyl_CoA_deC_C"/>
</dbReference>
<dbReference type="InterPro" id="IPR042303">
    <property type="entry name" value="Malonyl_CoA_deC_C_sf"/>
</dbReference>
<dbReference type="InterPro" id="IPR035372">
    <property type="entry name" value="MCD_N"/>
</dbReference>
<dbReference type="InterPro" id="IPR038351">
    <property type="entry name" value="MCD_N_sf"/>
</dbReference>
<dbReference type="PANTHER" id="PTHR28641">
    <property type="match status" value="1"/>
</dbReference>
<dbReference type="PANTHER" id="PTHR28641:SF1">
    <property type="entry name" value="MALONYL-COA DECARBOXYLASE, MITOCHONDRIAL"/>
    <property type="match status" value="1"/>
</dbReference>
<dbReference type="Pfam" id="PF05292">
    <property type="entry name" value="MCD"/>
    <property type="match status" value="1"/>
</dbReference>
<dbReference type="Pfam" id="PF17408">
    <property type="entry name" value="MCD_N"/>
    <property type="match status" value="1"/>
</dbReference>
<proteinExistence type="evidence at protein level"/>
<comment type="function">
    <text evidence="7 9 10">Catalyzes the conversion of malonyl-CoA to acetyl-CoA. In the fatty acid biosynthesis MCD selectively removes malonyl-CoA and thus assures that methyl-malonyl-CoA is the only chain elongating substrate for fatty acid synthase and that fatty acids with multiple methyl side chains are produced. In peroxisomes it may be involved in degrading intraperoxisomal malonyl-CoA, which is generated by the peroxisomal beta-oxidation of odd chain-length dicarboxylic fatty acids. Plays a role in the metabolic balance between glucose and lipid oxidation in muscle independent of alterations in insulin signaling. May play a role in controlling the extent of ischemic injury by promoting glucose oxidation.</text>
</comment>
<comment type="catalytic activity">
    <reaction evidence="5 8 10">
        <text>malonyl-CoA + H(+) = acetyl-CoA + CO2</text>
        <dbReference type="Rhea" id="RHEA:18781"/>
        <dbReference type="ChEBI" id="CHEBI:15378"/>
        <dbReference type="ChEBI" id="CHEBI:16526"/>
        <dbReference type="ChEBI" id="CHEBI:57288"/>
        <dbReference type="ChEBI" id="CHEBI:57384"/>
        <dbReference type="EC" id="4.1.1.9"/>
    </reaction>
    <physiologicalReaction direction="left-to-right" evidence="12">
        <dbReference type="Rhea" id="RHEA:18782"/>
    </physiologicalReaction>
</comment>
<comment type="activity regulation">
    <text evidence="2">Malonyl-CoA decarboxylase activity does not require any cofactors or divalent metal ions.</text>
</comment>
<comment type="biophysicochemical properties">
    <kinetics>
        <KM evidence="8">0.36 mM for malonyl-CoA</KM>
    </kinetics>
</comment>
<comment type="pathway">
    <text>Metabolic intermediate biosynthesis; acetyl-CoA biosynthesis; acetyl-CoA from malonyl-CoA: step 1/1.</text>
</comment>
<comment type="subunit">
    <text evidence="2">Homotetramer. Dimer of dimers. The two subunits within a dimer display conformational differences suggesting that at any given moment, only one of the two subunits is competent for malonyl-CoA binding and catalytic activity. Under oxidizing conditions, can form disulfide-linked homotetramers (in vitro). Associates with the peroxisomal targeting signal receptor PEX5 (By similarity).</text>
</comment>
<comment type="subcellular location">
    <subcellularLocation>
        <location evidence="10">Cytoplasm</location>
    </subcellularLocation>
    <subcellularLocation>
        <location evidence="10">Mitochondrion matrix</location>
    </subcellularLocation>
    <subcellularLocation>
        <location evidence="1">Peroxisome</location>
    </subcellularLocation>
    <subcellularLocation>
        <location evidence="10">Peroxisome matrix</location>
    </subcellularLocation>
    <text>Enzymatically active in all three subcellular compartments.</text>
</comment>
<comment type="alternative products">
    <event type="alternative initiation"/>
    <isoform>
        <id>Q920F5-1</id>
        <name>Mitochondrial</name>
        <sequence type="displayed"/>
    </isoform>
    <isoform>
        <id>Q920F5-2</id>
        <name>Cytoplasmic+peroxisomal</name>
        <sequence type="described" ref="VSP_018818"/>
    </isoform>
    <text>According to PubMed:10229677, a single transcription start site has been demonstrated.</text>
</comment>
<comment type="tissue specificity">
    <text evidence="5 6 7 8">Expressed in liver, heart, skeletal muscles and adipose tissues (at protein level). Ubiquitous. Strongly expressed in liver, kidney, heart, skeletal muscle and adipose tissues. Weakly expressed in brain.</text>
</comment>
<comment type="PTM">
    <text evidence="3">Acetylation at Lys-471 activates malonyl-CoA decarboxylase activity. Deacetylation at Lys-471 by SIRT4 represses activity, leading to promote lipogenesis (By similarity).</text>
</comment>
<comment type="PTM">
    <text evidence="12">Interchain disulfide bonds may form in peroxisomes (Potential). Interchain disulfide bonds are not expected to form in the reducing environment of the cytoplasm and mitochondria.</text>
</comment>
<comment type="miscellaneous">
    <molecule>Isoform Cytoplasmic+peroxisomal</molecule>
    <text evidence="13">May be produced by alternative initiation at Met-39 of isoform mitochondrial. Alternatively, represents a proteolytic processed form of the mitochondrial form (PubMed:10947976).</text>
</comment>
<name>DCMC_RAT</name>
<feature type="transit peptide" description="Mitochondrion" evidence="4">
    <location>
        <begin position="1"/>
        <end position="38"/>
    </location>
</feature>
<feature type="chain" id="PRO_0000021092" description="Malonyl-CoA decarboxylase, mitochondrial">
    <location>
        <begin position="39"/>
        <end position="492"/>
    </location>
</feature>
<feature type="region of interest" description="Alpha-helical domain" evidence="1">
    <location>
        <begin position="39"/>
        <end position="189"/>
    </location>
</feature>
<feature type="region of interest" description="Catalytic domain" evidence="1">
    <location>
        <begin position="190"/>
        <end position="492"/>
    </location>
</feature>
<feature type="short sequence motif" description="Microbody targeting signal" evidence="4">
    <location>
        <begin position="490"/>
        <end position="492"/>
    </location>
</feature>
<feature type="active site" description="Proton acceptor" evidence="1">
    <location>
        <position position="328"/>
    </location>
</feature>
<feature type="active site" description="Proton donor" evidence="1">
    <location>
        <position position="422"/>
    </location>
</feature>
<feature type="binding site" evidence="1">
    <location>
        <begin position="298"/>
        <end position="304"/>
    </location>
    <ligand>
        <name>malonyl-CoA</name>
        <dbReference type="ChEBI" id="CHEBI:57384"/>
    </ligand>
</feature>
<feature type="binding site" evidence="1">
    <location>
        <position position="328"/>
    </location>
    <ligand>
        <name>malonyl-CoA</name>
        <dbReference type="ChEBI" id="CHEBI:57384"/>
    </ligand>
</feature>
<feature type="binding site" evidence="1">
    <location>
        <position position="422"/>
    </location>
    <ligand>
        <name>malonyl-CoA</name>
        <dbReference type="ChEBI" id="CHEBI:57384"/>
    </ligand>
</feature>
<feature type="site" description="Essential for catalytic activity">
    <location>
        <position position="210"/>
    </location>
</feature>
<feature type="modified residue" description="N6-acetyllysine" evidence="11">
    <location>
        <position position="58"/>
    </location>
</feature>
<feature type="modified residue" description="N6-acetyllysine; alternate" evidence="3">
    <location>
        <position position="167"/>
    </location>
</feature>
<feature type="modified residue" description="N6-succinyllysine; alternate" evidence="3">
    <location>
        <position position="167"/>
    </location>
</feature>
<feature type="modified residue" description="N6-acetyllysine" evidence="11">
    <location>
        <position position="210"/>
    </location>
</feature>
<feature type="modified residue" description="N6-succinyllysine" evidence="3">
    <location>
        <position position="221"/>
    </location>
</feature>
<feature type="modified residue" description="N6-acetyllysine" evidence="11">
    <location>
        <position position="316"/>
    </location>
</feature>
<feature type="modified residue" description="N6-acetyllysine; alternate" evidence="3">
    <location>
        <position position="385"/>
    </location>
</feature>
<feature type="modified residue" description="N6-succinyllysine; alternate" evidence="3">
    <location>
        <position position="385"/>
    </location>
</feature>
<feature type="modified residue" description="N6-acetyllysine" evidence="11">
    <location>
        <position position="388"/>
    </location>
</feature>
<feature type="modified residue" description="N6-acetyllysine" evidence="11">
    <location>
        <position position="441"/>
    </location>
</feature>
<feature type="modified residue" description="N6-acetyllysine" evidence="3">
    <location>
        <position position="471"/>
    </location>
</feature>
<feature type="disulfide bond" description="Interchain" evidence="4">
    <location>
        <position position="205"/>
    </location>
</feature>
<feature type="splice variant" id="VSP_018818" description="In isoform Cytoplasmic+peroxisomal." evidence="12">
    <location>
        <begin position="1"/>
        <end position="38"/>
    </location>
</feature>
<feature type="mutagenesis site" description="Abolishes catalytic activity." evidence="11">
    <original>K</original>
    <variation>M</variation>
    <location>
        <position position="210"/>
    </location>
</feature>
<feature type="mutagenesis site" description="40% reduction in catalytic activity." evidence="11">
    <original>K</original>
    <variation>M</variation>
    <location>
        <position position="308"/>
    </location>
</feature>
<feature type="mutagenesis site" description="40% reduction in catalytic activity." evidence="11">
    <original>K</original>
    <variation>M</variation>
    <location>
        <position position="388"/>
    </location>
</feature>
<feature type="sequence conflict" description="In Ref. 1; CAB46681." evidence="12" ref="1">
    <original>E</original>
    <variation>D</variation>
    <location>
        <position position="213"/>
    </location>
</feature>
<feature type="sequence conflict" description="In Ref. 1; CAB46681." evidence="12" ref="1">
    <original>H</original>
    <variation>Q</variation>
    <location>
        <position position="218"/>
    </location>
</feature>
<feature type="sequence conflict" description="In Ref. 1; CAB46681." evidence="12" ref="1">
    <original>E</original>
    <variation>G</variation>
    <location>
        <position position="301"/>
    </location>
</feature>
<feature type="sequence conflict" description="In Ref. 1; CAB46681." evidence="12" ref="1">
    <location>
        <position position="412"/>
    </location>
</feature>
<sequence length="492" mass="54762">MRGLGPSLRARRLLPLRYPPRPPGPRGPRLCSGLTASAMDELLRRAVPPTPAYELREKTPAPAEGQCADFVSFYGGLAEAAQRAELLGRLAQGFGVDHGQVAEQSAGVLQLRQQSREAAVLLQAEDRLRYALVPRYRGLFHHISKLDGGVRFLVQLRADLLEAQALKLVEGPHVREMNGVLKSMLSEWFSSGFLNLERVTWHSPCEVLQKISECEAVHPVKNWMDMKRRVGPYRRCYFFSHCSTPGDPLVVLHVALTGDISNNIQSIVKECPPSETEEKNRIAAAVFYSISLTQQGLQGVELGTFLIKRVVKELQKEFPHLGAFSSLSPIPGFTKWLLGLLNVQGKEYGRNELFTDSECKEIAEVTGDPVHESLKGLLSSGEWAKSEKLAQALQGPLMRLCAWYLYGEKHRGYALNPVANFHLQNGAVMWRINWMADSSLKGLTSSCGLMVNYRYYLEETGPNSISYLGSKNIKASEQILSLVAQFQSNSKL</sequence>
<gene>
    <name evidence="14" type="primary">Mlycd</name>
</gene>
<protein>
    <recommendedName>
        <fullName evidence="12">Malonyl-CoA decarboxylase, mitochondrial</fullName>
        <shortName>MCD</shortName>
        <ecNumber evidence="5 8 10">4.1.1.9</ecNumber>
    </recommendedName>
</protein>